<organism>
    <name type="scientific">Pyrococcus horikoshii (strain ATCC 700860 / DSM 12428 / JCM 9974 / NBRC 100139 / OT-3)</name>
    <dbReference type="NCBI Taxonomy" id="70601"/>
    <lineage>
        <taxon>Archaea</taxon>
        <taxon>Methanobacteriati</taxon>
        <taxon>Methanobacteriota</taxon>
        <taxon>Thermococci</taxon>
        <taxon>Thermococcales</taxon>
        <taxon>Thermococcaceae</taxon>
        <taxon>Pyrococcus</taxon>
    </lineage>
</organism>
<proteinExistence type="inferred from homology"/>
<comment type="function">
    <text evidence="1">The glycine cleavage system catalyzes the degradation of glycine. The P protein binds the alpha-amino group of glycine through its pyridoxal phosphate cofactor; CO(2) is released and the remaining methylamine moiety is then transferred to the lipoamide cofactor of the H protein.</text>
</comment>
<comment type="catalytic activity">
    <reaction evidence="1">
        <text>N(6)-[(R)-lipoyl]-L-lysyl-[glycine-cleavage complex H protein] + glycine + H(+) = N(6)-[(R)-S(8)-aminomethyldihydrolipoyl]-L-lysyl-[glycine-cleavage complex H protein] + CO2</text>
        <dbReference type="Rhea" id="RHEA:24304"/>
        <dbReference type="Rhea" id="RHEA-COMP:10494"/>
        <dbReference type="Rhea" id="RHEA-COMP:10495"/>
        <dbReference type="ChEBI" id="CHEBI:15378"/>
        <dbReference type="ChEBI" id="CHEBI:16526"/>
        <dbReference type="ChEBI" id="CHEBI:57305"/>
        <dbReference type="ChEBI" id="CHEBI:83099"/>
        <dbReference type="ChEBI" id="CHEBI:83143"/>
        <dbReference type="EC" id="1.4.4.2"/>
    </reaction>
</comment>
<comment type="subunit">
    <text evidence="1">The glycine cleavage system is composed of four proteins: P, T, L and H. In this organism, the P 'protein' is a heterodimer of two subunits.</text>
</comment>
<comment type="similarity">
    <text evidence="1">Belongs to the GcvP family. N-terminal subunit subfamily.</text>
</comment>
<name>GCSPA_PYRHO</name>
<keyword id="KW-0560">Oxidoreductase</keyword>
<dbReference type="EC" id="1.4.4.2" evidence="1"/>
<dbReference type="EMBL" id="BA000001">
    <property type="protein sequence ID" value="BAA31122.1"/>
    <property type="molecule type" value="Genomic_DNA"/>
</dbReference>
<dbReference type="PIR" id="C71216">
    <property type="entry name" value="C71216"/>
</dbReference>
<dbReference type="RefSeq" id="WP_010886056.1">
    <property type="nucleotide sequence ID" value="NC_000961.1"/>
</dbReference>
<dbReference type="SMR" id="O57708"/>
<dbReference type="STRING" id="70601.gene:9379008"/>
<dbReference type="EnsemblBacteria" id="BAA31122">
    <property type="protein sequence ID" value="BAA31122"/>
    <property type="gene ID" value="BAA31122"/>
</dbReference>
<dbReference type="GeneID" id="1442838"/>
<dbReference type="KEGG" id="pho:PH1995"/>
<dbReference type="eggNOG" id="arCOG00077">
    <property type="taxonomic scope" value="Archaea"/>
</dbReference>
<dbReference type="OrthoDB" id="17655at2157"/>
<dbReference type="Proteomes" id="UP000000752">
    <property type="component" value="Chromosome"/>
</dbReference>
<dbReference type="GO" id="GO:0004375">
    <property type="term" value="F:glycine dehydrogenase (decarboxylating) activity"/>
    <property type="evidence" value="ECO:0007669"/>
    <property type="project" value="UniProtKB-EC"/>
</dbReference>
<dbReference type="GO" id="GO:0019464">
    <property type="term" value="P:glycine decarboxylation via glycine cleavage system"/>
    <property type="evidence" value="ECO:0007669"/>
    <property type="project" value="UniProtKB-UniRule"/>
</dbReference>
<dbReference type="GO" id="GO:0009116">
    <property type="term" value="P:nucleoside metabolic process"/>
    <property type="evidence" value="ECO:0007669"/>
    <property type="project" value="InterPro"/>
</dbReference>
<dbReference type="CDD" id="cd00613">
    <property type="entry name" value="GDC-P"/>
    <property type="match status" value="1"/>
</dbReference>
<dbReference type="Gene3D" id="3.90.1150.10">
    <property type="entry name" value="Aspartate Aminotransferase, domain 1"/>
    <property type="match status" value="1"/>
</dbReference>
<dbReference type="Gene3D" id="3.40.640.10">
    <property type="entry name" value="Type I PLP-dependent aspartate aminotransferase-like (Major domain)"/>
    <property type="match status" value="1"/>
</dbReference>
<dbReference type="HAMAP" id="MF_00712">
    <property type="entry name" value="GcvPA"/>
    <property type="match status" value="1"/>
</dbReference>
<dbReference type="InterPro" id="IPR023010">
    <property type="entry name" value="GcvPA"/>
</dbReference>
<dbReference type="InterPro" id="IPR049315">
    <property type="entry name" value="GDC-P_N"/>
</dbReference>
<dbReference type="InterPro" id="IPR020581">
    <property type="entry name" value="GDC_P"/>
</dbReference>
<dbReference type="InterPro" id="IPR015424">
    <property type="entry name" value="PyrdxlP-dep_Trfase"/>
</dbReference>
<dbReference type="InterPro" id="IPR015421">
    <property type="entry name" value="PyrdxlP-dep_Trfase_major"/>
</dbReference>
<dbReference type="InterPro" id="IPR015422">
    <property type="entry name" value="PyrdxlP-dep_Trfase_small"/>
</dbReference>
<dbReference type="NCBIfam" id="NF001696">
    <property type="entry name" value="PRK00451.1"/>
    <property type="match status" value="1"/>
</dbReference>
<dbReference type="PANTHER" id="PTHR42806">
    <property type="entry name" value="GLYCINE CLEAVAGE SYSTEM P-PROTEIN"/>
    <property type="match status" value="1"/>
</dbReference>
<dbReference type="PANTHER" id="PTHR42806:SF1">
    <property type="entry name" value="GLYCINE DEHYDROGENASE (DECARBOXYLATING)"/>
    <property type="match status" value="1"/>
</dbReference>
<dbReference type="Pfam" id="PF02347">
    <property type="entry name" value="GDC-P"/>
    <property type="match status" value="1"/>
</dbReference>
<dbReference type="PIRSF" id="PIRSF006815">
    <property type="entry name" value="GcvPA"/>
    <property type="match status" value="1"/>
</dbReference>
<dbReference type="SUPFAM" id="SSF53383">
    <property type="entry name" value="PLP-dependent transferases"/>
    <property type="match status" value="1"/>
</dbReference>
<protein>
    <recommendedName>
        <fullName evidence="1">Probable glycine dehydrogenase (decarboxylating) subunit 1</fullName>
        <ecNumber evidence="1">1.4.4.2</ecNumber>
    </recommendedName>
    <alternativeName>
        <fullName evidence="1">Glycine cleavage system P-protein subunit 1</fullName>
    </alternativeName>
    <alternativeName>
        <fullName evidence="1">Glycine decarboxylase subunit 1</fullName>
    </alternativeName>
    <alternativeName>
        <fullName evidence="1">Glycine dehydrogenase (aminomethyl-transferring) subunit 1</fullName>
    </alternativeName>
</protein>
<accession>O57708</accession>
<reference key="1">
    <citation type="journal article" date="1998" name="DNA Res.">
        <title>Complete sequence and gene organization of the genome of a hyper-thermophilic archaebacterium, Pyrococcus horikoshii OT3.</title>
        <authorList>
            <person name="Kawarabayasi Y."/>
            <person name="Sawada M."/>
            <person name="Horikawa H."/>
            <person name="Haikawa Y."/>
            <person name="Hino Y."/>
            <person name="Yamamoto S."/>
            <person name="Sekine M."/>
            <person name="Baba S."/>
            <person name="Kosugi H."/>
            <person name="Hosoyama A."/>
            <person name="Nagai Y."/>
            <person name="Sakai M."/>
            <person name="Ogura K."/>
            <person name="Otsuka R."/>
            <person name="Nakazawa H."/>
            <person name="Takamiya M."/>
            <person name="Ohfuku Y."/>
            <person name="Funahashi T."/>
            <person name="Tanaka T."/>
            <person name="Kudoh Y."/>
            <person name="Yamazaki J."/>
            <person name="Kushida N."/>
            <person name="Oguchi A."/>
            <person name="Aoki K."/>
            <person name="Yoshizawa T."/>
            <person name="Nakamura Y."/>
            <person name="Robb F.T."/>
            <person name="Horikoshi K."/>
            <person name="Masuchi Y."/>
            <person name="Shizuya H."/>
            <person name="Kikuchi H."/>
        </authorList>
    </citation>
    <scope>NUCLEOTIDE SEQUENCE [LARGE SCALE GENOMIC DNA]</scope>
    <source>
        <strain>ATCC 700860 / DSM 12428 / JCM 9974 / NBRC 100139 / OT-3</strain>
    </source>
</reference>
<evidence type="ECO:0000255" key="1">
    <source>
        <dbReference type="HAMAP-Rule" id="MF_00712"/>
    </source>
</evidence>
<sequence length="449" mass="50357">MGNHYIPNSAHKEEMLKEIGLSSIEELFADIPEKFIKEELNLPEGKSEYEVFLEMNEILEKNKTVLEMPTFLGAGTYFHYIPAHVKHLIERSEFLTSYTPYQPEISQGMLQALFEYQSLIAELVGLPVVNSSMYDWGTAMAEAALMTVRLHKGKRKKFVVPKHTHPERLQVLRTYTRGPEVEIVTVNWNERGQVDVEDLKEKVKDAAGVYIEIPNFFGLLEEEIREVGEIAHEAGAYFVVGVDPTILGIVEAPGELGADIVVGEASYFGNPMNFGGPRAGIFAVKNDMKLIRQMPGRIIGMTKDAEGKRAFVMTLQTREQHIRRAKATSNICSNEALVAVAAAIHIASLGPKGIRELGEVILKNTAYLKKRLSEVAEIPFDGVNFKDVLVRFDKPYREIHEELLKRNIHGGYYVGSHFPELGEAALFAATETTRKEWVDALISALKEVI</sequence>
<gene>
    <name evidence="1" type="primary">gcvPA</name>
    <name type="ordered locus">PH1995</name>
</gene>
<feature type="chain" id="PRO_0000166986" description="Probable glycine dehydrogenase (decarboxylating) subunit 1">
    <location>
        <begin position="1"/>
        <end position="449"/>
    </location>
</feature>